<name>HDX_MOUSE</name>
<organism>
    <name type="scientific">Mus musculus</name>
    <name type="common">Mouse</name>
    <dbReference type="NCBI Taxonomy" id="10090"/>
    <lineage>
        <taxon>Eukaryota</taxon>
        <taxon>Metazoa</taxon>
        <taxon>Chordata</taxon>
        <taxon>Craniata</taxon>
        <taxon>Vertebrata</taxon>
        <taxon>Euteleostomi</taxon>
        <taxon>Mammalia</taxon>
        <taxon>Eutheria</taxon>
        <taxon>Euarchontoglires</taxon>
        <taxon>Glires</taxon>
        <taxon>Rodentia</taxon>
        <taxon>Myomorpha</taxon>
        <taxon>Muroidea</taxon>
        <taxon>Muridae</taxon>
        <taxon>Murinae</taxon>
        <taxon>Mus</taxon>
        <taxon>Mus</taxon>
    </lineage>
</organism>
<reference key="1">
    <citation type="journal article" date="2009" name="PLoS Biol.">
        <title>Lineage-specific biology revealed by a finished genome assembly of the mouse.</title>
        <authorList>
            <person name="Church D.M."/>
            <person name="Goodstadt L."/>
            <person name="Hillier L.W."/>
            <person name="Zody M.C."/>
            <person name="Goldstein S."/>
            <person name="She X."/>
            <person name="Bult C.J."/>
            <person name="Agarwala R."/>
            <person name="Cherry J.L."/>
            <person name="DiCuccio M."/>
            <person name="Hlavina W."/>
            <person name="Kapustin Y."/>
            <person name="Meric P."/>
            <person name="Maglott D."/>
            <person name="Birtle Z."/>
            <person name="Marques A.C."/>
            <person name="Graves T."/>
            <person name="Zhou S."/>
            <person name="Teague B."/>
            <person name="Potamousis K."/>
            <person name="Churas C."/>
            <person name="Place M."/>
            <person name="Herschleb J."/>
            <person name="Runnheim R."/>
            <person name="Forrest D."/>
            <person name="Amos-Landgraf J."/>
            <person name="Schwartz D.C."/>
            <person name="Cheng Z."/>
            <person name="Lindblad-Toh K."/>
            <person name="Eichler E.E."/>
            <person name="Ponting C.P."/>
        </authorList>
    </citation>
    <scope>NUCLEOTIDE SEQUENCE [LARGE SCALE GENOMIC DNA]</scope>
    <source>
        <strain>C57BL/6J</strain>
    </source>
</reference>
<reference key="2">
    <citation type="journal article" date="2004" name="Genome Res.">
        <title>The status, quality, and expansion of the NIH full-length cDNA project: the Mammalian Gene Collection (MGC).</title>
        <authorList>
            <consortium name="The MGC Project Team"/>
        </authorList>
    </citation>
    <scope>NUCLEOTIDE SEQUENCE [LARGE SCALE MRNA] (ISOFORMS 1 AND 2)</scope>
</reference>
<protein>
    <recommendedName>
        <fullName>Highly divergent homeobox</fullName>
    </recommendedName>
</protein>
<proteinExistence type="evidence at transcript level"/>
<evidence type="ECO:0000250" key="1">
    <source>
        <dbReference type="UniProtKB" id="Q7Z353"/>
    </source>
</evidence>
<evidence type="ECO:0000255" key="2">
    <source>
        <dbReference type="PROSITE-ProRule" id="PRU00108"/>
    </source>
</evidence>
<evidence type="ECO:0000256" key="3">
    <source>
        <dbReference type="SAM" id="MobiDB-lite"/>
    </source>
</evidence>
<evidence type="ECO:0000303" key="4">
    <source>
    </source>
</evidence>
<gene>
    <name type="primary">Hdx</name>
</gene>
<accession>Q14B70</accession>
<accession>Q14B69</accession>
<comment type="subcellular location">
    <subcellularLocation>
        <location evidence="2">Nucleus</location>
    </subcellularLocation>
</comment>
<comment type="alternative products">
    <event type="alternative splicing"/>
    <isoform>
        <id>Q14B70-1</id>
        <name>1</name>
        <sequence type="displayed"/>
    </isoform>
    <isoform>
        <id>Q14B70-2</id>
        <name>2</name>
        <sequence type="described" ref="VSP_027709"/>
    </isoform>
</comment>
<sequence>MNLRSVFTVEQQRILQRYYENGMTNQSKNCFQLILQCAQETKLDFSVVRTWVGNKRRKMSSKSCESGAAGTVSGTSLAAPDITVRNVVNIARPSSQQSSWTSANNDVIVTGIYSPVSSSSKQGTTKHTNTQITEAHKIPIQKAANKNDTELQLHIPVQRQVAHCKNASVLLGEKTIILSRQTSVLNAGNSVYNHTKKSYGSSPVQASEMTVPQKPSVCQRPCKIEPVGIQRSYKPEHAGLASHNLCGQKPTIRDPCCRTQNLEIREVFSLAVSDYPQRILGGNSTQKPASAEGTCLSIAMETGDAEDEYAREEELASMGAQITSYSRFYESGNSLRAENQSTNLPGPGRNLPNSQMVNIRDLSDNVLYQTRDYHLTPRTSLHTASSTMYSNTNPSRSNFSPHFVSSNQLRLSQNQNNYQISGNLSVPWITGCSRKRALQDRTQFSDRDLATLKKYWDNGMTSLGSVCREKIEAVAIELNVDCEIVRTWIGNRRRKYRLMGIEVPPPRGGPADFSEQPESGSLSALTPGEEAGPEVGEDNDRNDEVSICLSEASSQEESNELIPNETRAHKDEEHQAVSADNVKIEIIDDEESDMISNSEVEQENSLLDYKNEEVRFIENELEIQKQKYFKLQSFVRNLILAMKADDKDQQQALLSDLPPELEEMDCSHASPDPDDTSLSVSSLSEKNASDSL</sequence>
<feature type="chain" id="PRO_0000299488" description="Highly divergent homeobox">
    <location>
        <begin position="1"/>
        <end position="692"/>
    </location>
</feature>
<feature type="DNA-binding region" description="Homeobox 1" evidence="2">
    <location>
        <begin position="3"/>
        <end position="63"/>
    </location>
</feature>
<feature type="DNA-binding region" description="Homeobox 2" evidence="2">
    <location>
        <begin position="437"/>
        <end position="500"/>
    </location>
</feature>
<feature type="region of interest" description="Disordered" evidence="3">
    <location>
        <begin position="117"/>
        <end position="136"/>
    </location>
</feature>
<feature type="region of interest" description="Disordered" evidence="3">
    <location>
        <begin position="505"/>
        <end position="541"/>
    </location>
</feature>
<feature type="region of interest" description="Disordered" evidence="3">
    <location>
        <begin position="647"/>
        <end position="692"/>
    </location>
</feature>
<feature type="compositionally biased region" description="Polar residues" evidence="3">
    <location>
        <begin position="117"/>
        <end position="133"/>
    </location>
</feature>
<feature type="compositionally biased region" description="Polar residues" evidence="3">
    <location>
        <begin position="676"/>
        <end position="692"/>
    </location>
</feature>
<feature type="cross-link" description="Glycyl lysine isopeptide (Lys-Gly) (interchain with G-Cter in SUMO2)" evidence="1">
    <location>
        <position position="137"/>
    </location>
</feature>
<feature type="cross-link" description="Glycyl lysine isopeptide (Lys-Gly) (interchain with G-Cter in SUMO2)" evidence="1">
    <location>
        <position position="142"/>
    </location>
</feature>
<feature type="cross-link" description="Glycyl lysine isopeptide (Lys-Gly) (interchain with G-Cter in SUMO2)" evidence="1">
    <location>
        <position position="146"/>
    </location>
</feature>
<feature type="cross-link" description="Glycyl lysine isopeptide (Lys-Gly) (interchain with G-Cter in SUMO2)" evidence="1">
    <location>
        <position position="165"/>
    </location>
</feature>
<feature type="cross-link" description="Glycyl lysine isopeptide (Lys-Gly) (interchain with G-Cter in SUMO2)" evidence="1">
    <location>
        <position position="174"/>
    </location>
</feature>
<feature type="cross-link" description="Glycyl lysine isopeptide (Lys-Gly) (interchain with G-Cter in SUMO2)" evidence="1">
    <location>
        <position position="196"/>
    </location>
</feature>
<feature type="cross-link" description="Glycyl lysine isopeptide (Lys-Gly) (interchain with G-Cter in SUMO2)" evidence="1">
    <location>
        <position position="214"/>
    </location>
</feature>
<feature type="cross-link" description="Glycyl lysine isopeptide (Lys-Gly) (interchain with G-Cter in SUMO2)" evidence="1">
    <location>
        <position position="223"/>
    </location>
</feature>
<feature type="cross-link" description="Glycyl lysine isopeptide (Lys-Gly) (interchain with G-Cter in SUMO2)" evidence="1">
    <location>
        <position position="234"/>
    </location>
</feature>
<feature type="splice variant" id="VSP_027709" description="In isoform 2." evidence="4">
    <location>
        <begin position="1"/>
        <end position="58"/>
    </location>
</feature>
<dbReference type="EMBL" id="BX539333">
    <property type="status" value="NOT_ANNOTATED_CDS"/>
    <property type="molecule type" value="Genomic_DNA"/>
</dbReference>
<dbReference type="EMBL" id="BC116300">
    <property type="protein sequence ID" value="AAI16301.1"/>
    <property type="molecule type" value="mRNA"/>
</dbReference>
<dbReference type="EMBL" id="BC116301">
    <property type="protein sequence ID" value="AAI16302.1"/>
    <property type="molecule type" value="mRNA"/>
</dbReference>
<dbReference type="CCDS" id="CCDS41105.1">
    <molecule id="Q14B70-1"/>
</dbReference>
<dbReference type="CCDS" id="CCDS72422.1">
    <molecule id="Q14B70-2"/>
</dbReference>
<dbReference type="RefSeq" id="NP_001074018.1">
    <molecule id="Q14B70-1"/>
    <property type="nucleotide sequence ID" value="NM_001080549.2"/>
</dbReference>
<dbReference type="RefSeq" id="NP_001277388.1">
    <molecule id="Q14B70-2"/>
    <property type="nucleotide sequence ID" value="NM_001290459.1"/>
</dbReference>
<dbReference type="SMR" id="Q14B70"/>
<dbReference type="BioGRID" id="232805">
    <property type="interactions" value="2"/>
</dbReference>
<dbReference type="FunCoup" id="Q14B70">
    <property type="interactions" value="50"/>
</dbReference>
<dbReference type="STRING" id="10090.ENSMUSP00000109049"/>
<dbReference type="GlyGen" id="Q14B70">
    <property type="glycosylation" value="1 site, 1 O-linked glycan (1 site)"/>
</dbReference>
<dbReference type="iPTMnet" id="Q14B70"/>
<dbReference type="PhosphoSitePlus" id="Q14B70"/>
<dbReference type="jPOST" id="Q14B70"/>
<dbReference type="PaxDb" id="10090-ENSMUSP00000109049"/>
<dbReference type="PeptideAtlas" id="Q14B70"/>
<dbReference type="Antibodypedia" id="28380">
    <property type="antibodies" value="53 antibodies from 13 providers"/>
</dbReference>
<dbReference type="Ensembl" id="ENSMUST00000038472.7">
    <molecule id="Q14B70-2"/>
    <property type="protein sequence ID" value="ENSMUSP00000043482.6"/>
    <property type="gene ID" value="ENSMUSG00000034551.13"/>
</dbReference>
<dbReference type="Ensembl" id="ENSMUST00000113422.9">
    <molecule id="Q14B70-1"/>
    <property type="protein sequence ID" value="ENSMUSP00000109049.3"/>
    <property type="gene ID" value="ENSMUSG00000034551.13"/>
</dbReference>
<dbReference type="GeneID" id="245596"/>
<dbReference type="KEGG" id="mmu:245596"/>
<dbReference type="UCSC" id="uc009udb.1">
    <molecule id="Q14B70-1"/>
    <property type="organism name" value="mouse"/>
</dbReference>
<dbReference type="AGR" id="MGI:2685226"/>
<dbReference type="CTD" id="139324"/>
<dbReference type="MGI" id="MGI:2685226">
    <property type="gene designation" value="Hdx"/>
</dbReference>
<dbReference type="VEuPathDB" id="HostDB:ENSMUSG00000034551"/>
<dbReference type="eggNOG" id="ENOG502QPZG">
    <property type="taxonomic scope" value="Eukaryota"/>
</dbReference>
<dbReference type="GeneTree" id="ENSGT00390000008591"/>
<dbReference type="HOGENOM" id="CLU_025064_0_0_1"/>
<dbReference type="InParanoid" id="Q14B70"/>
<dbReference type="OMA" id="QPCKIEP"/>
<dbReference type="OrthoDB" id="10055960at2759"/>
<dbReference type="TreeFam" id="TF330998"/>
<dbReference type="BioGRID-ORCS" id="245596">
    <property type="hits" value="1 hit in 76 CRISPR screens"/>
</dbReference>
<dbReference type="PRO" id="PR:Q14B70"/>
<dbReference type="Proteomes" id="UP000000589">
    <property type="component" value="Chromosome X"/>
</dbReference>
<dbReference type="RNAct" id="Q14B70">
    <property type="molecule type" value="protein"/>
</dbReference>
<dbReference type="Bgee" id="ENSMUSG00000034551">
    <property type="expression patterns" value="Expressed in epiblast (generic) and 39 other cell types or tissues"/>
</dbReference>
<dbReference type="GO" id="GO:0005634">
    <property type="term" value="C:nucleus"/>
    <property type="evidence" value="ECO:0007669"/>
    <property type="project" value="UniProtKB-SubCell"/>
</dbReference>
<dbReference type="GO" id="GO:0003677">
    <property type="term" value="F:DNA binding"/>
    <property type="evidence" value="ECO:0007669"/>
    <property type="project" value="UniProtKB-KW"/>
</dbReference>
<dbReference type="CDD" id="cd00086">
    <property type="entry name" value="homeodomain"/>
    <property type="match status" value="2"/>
</dbReference>
<dbReference type="FunFam" id="1.10.10.60:FF:000244">
    <property type="entry name" value="Highly divergent homeobox"/>
    <property type="match status" value="1"/>
</dbReference>
<dbReference type="Gene3D" id="1.10.10.60">
    <property type="entry name" value="Homeodomain-like"/>
    <property type="match status" value="2"/>
</dbReference>
<dbReference type="InterPro" id="IPR001356">
    <property type="entry name" value="HD"/>
</dbReference>
<dbReference type="InterPro" id="IPR009057">
    <property type="entry name" value="Homeodomain-like_sf"/>
</dbReference>
<dbReference type="InterPro" id="IPR050255">
    <property type="entry name" value="POU_domain_TF"/>
</dbReference>
<dbReference type="PANTHER" id="PTHR11636:SF80">
    <property type="entry name" value="HIGHLY DIVERGENT HOMEOBOX"/>
    <property type="match status" value="1"/>
</dbReference>
<dbReference type="PANTHER" id="PTHR11636">
    <property type="entry name" value="POU DOMAIN"/>
    <property type="match status" value="1"/>
</dbReference>
<dbReference type="SMART" id="SM00389">
    <property type="entry name" value="HOX"/>
    <property type="match status" value="2"/>
</dbReference>
<dbReference type="SUPFAM" id="SSF46689">
    <property type="entry name" value="Homeodomain-like"/>
    <property type="match status" value="2"/>
</dbReference>
<dbReference type="PROSITE" id="PS50071">
    <property type="entry name" value="HOMEOBOX_2"/>
    <property type="match status" value="1"/>
</dbReference>
<keyword id="KW-0025">Alternative splicing</keyword>
<keyword id="KW-0238">DNA-binding</keyword>
<keyword id="KW-0371">Homeobox</keyword>
<keyword id="KW-1017">Isopeptide bond</keyword>
<keyword id="KW-0539">Nucleus</keyword>
<keyword id="KW-1185">Reference proteome</keyword>
<keyword id="KW-0677">Repeat</keyword>
<keyword id="KW-0832">Ubl conjugation</keyword>